<name>RS18_DEHMC</name>
<proteinExistence type="inferred from homology"/>
<sequence>MSIQDRPNRPARGGRGRYTPKRKICSFCAEKVSRIDYKDSAKLARYISDRGKIEPRRRTGTCARHQRALANAIKRARFIALMPFVSEHVRRQGNVATFSPIRELRPEPKIAEAKIEPKVEVKAEVAVPEVKAEVKPAAEASKPAESA</sequence>
<feature type="chain" id="PRO_0000345456" description="Small ribosomal subunit protein bS18">
    <location>
        <begin position="1"/>
        <end position="147"/>
    </location>
</feature>
<organism>
    <name type="scientific">Dehalococcoides mccartyi (strain CBDB1)</name>
    <dbReference type="NCBI Taxonomy" id="255470"/>
    <lineage>
        <taxon>Bacteria</taxon>
        <taxon>Bacillati</taxon>
        <taxon>Chloroflexota</taxon>
        <taxon>Dehalococcoidia</taxon>
        <taxon>Dehalococcoidales</taxon>
        <taxon>Dehalococcoidaceae</taxon>
        <taxon>Dehalococcoides</taxon>
    </lineage>
</organism>
<evidence type="ECO:0000255" key="1">
    <source>
        <dbReference type="HAMAP-Rule" id="MF_00270"/>
    </source>
</evidence>
<evidence type="ECO:0000305" key="2"/>
<reference key="1">
    <citation type="journal article" date="2005" name="Nat. Biotechnol.">
        <title>Genome sequence of the chlorinated compound-respiring bacterium Dehalococcoides species strain CBDB1.</title>
        <authorList>
            <person name="Kube M."/>
            <person name="Beck A."/>
            <person name="Zinder S.H."/>
            <person name="Kuhl H."/>
            <person name="Reinhardt R."/>
            <person name="Adrian L."/>
        </authorList>
    </citation>
    <scope>NUCLEOTIDE SEQUENCE [LARGE SCALE GENOMIC DNA]</scope>
    <source>
        <strain>CBDB1</strain>
    </source>
</reference>
<accession>Q3ZY14</accession>
<comment type="function">
    <text evidence="1">Binds as a heterodimer with protein bS6 to the central domain of the 16S rRNA, where it helps stabilize the platform of the 30S subunit.</text>
</comment>
<comment type="subunit">
    <text evidence="1">Part of the 30S ribosomal subunit. Forms a tight heterodimer with protein bS6.</text>
</comment>
<comment type="similarity">
    <text evidence="1">Belongs to the bacterial ribosomal protein bS18 family.</text>
</comment>
<keyword id="KW-0687">Ribonucleoprotein</keyword>
<keyword id="KW-0689">Ribosomal protein</keyword>
<keyword id="KW-0694">RNA-binding</keyword>
<keyword id="KW-0699">rRNA-binding</keyword>
<gene>
    <name evidence="1" type="primary">rpsR</name>
    <name type="ordered locus">cbdbA1018</name>
</gene>
<dbReference type="EMBL" id="AJ965256">
    <property type="protein sequence ID" value="CAI83129.1"/>
    <property type="molecule type" value="Genomic_DNA"/>
</dbReference>
<dbReference type="RefSeq" id="WP_011309480.1">
    <property type="nucleotide sequence ID" value="NC_007356.1"/>
</dbReference>
<dbReference type="SMR" id="Q3ZY14"/>
<dbReference type="KEGG" id="deh:cbdbA1018"/>
<dbReference type="HOGENOM" id="CLU_144045_0_0_0"/>
<dbReference type="Proteomes" id="UP000000433">
    <property type="component" value="Chromosome"/>
</dbReference>
<dbReference type="GO" id="GO:0022627">
    <property type="term" value="C:cytosolic small ribosomal subunit"/>
    <property type="evidence" value="ECO:0007669"/>
    <property type="project" value="TreeGrafter"/>
</dbReference>
<dbReference type="GO" id="GO:0070181">
    <property type="term" value="F:small ribosomal subunit rRNA binding"/>
    <property type="evidence" value="ECO:0007669"/>
    <property type="project" value="TreeGrafter"/>
</dbReference>
<dbReference type="GO" id="GO:0003735">
    <property type="term" value="F:structural constituent of ribosome"/>
    <property type="evidence" value="ECO:0007669"/>
    <property type="project" value="InterPro"/>
</dbReference>
<dbReference type="GO" id="GO:0006412">
    <property type="term" value="P:translation"/>
    <property type="evidence" value="ECO:0007669"/>
    <property type="project" value="UniProtKB-UniRule"/>
</dbReference>
<dbReference type="Gene3D" id="4.10.640.10">
    <property type="entry name" value="Ribosomal protein S18"/>
    <property type="match status" value="1"/>
</dbReference>
<dbReference type="HAMAP" id="MF_00270">
    <property type="entry name" value="Ribosomal_bS18"/>
    <property type="match status" value="1"/>
</dbReference>
<dbReference type="InterPro" id="IPR001648">
    <property type="entry name" value="Ribosomal_bS18"/>
</dbReference>
<dbReference type="InterPro" id="IPR018275">
    <property type="entry name" value="Ribosomal_bS18_CS"/>
</dbReference>
<dbReference type="InterPro" id="IPR036870">
    <property type="entry name" value="Ribosomal_bS18_sf"/>
</dbReference>
<dbReference type="NCBIfam" id="TIGR00165">
    <property type="entry name" value="S18"/>
    <property type="match status" value="1"/>
</dbReference>
<dbReference type="PANTHER" id="PTHR13479">
    <property type="entry name" value="30S RIBOSOMAL PROTEIN S18"/>
    <property type="match status" value="1"/>
</dbReference>
<dbReference type="PANTHER" id="PTHR13479:SF40">
    <property type="entry name" value="SMALL RIBOSOMAL SUBUNIT PROTEIN BS18M"/>
    <property type="match status" value="1"/>
</dbReference>
<dbReference type="Pfam" id="PF01084">
    <property type="entry name" value="Ribosomal_S18"/>
    <property type="match status" value="1"/>
</dbReference>
<dbReference type="PRINTS" id="PR00974">
    <property type="entry name" value="RIBOSOMALS18"/>
</dbReference>
<dbReference type="SUPFAM" id="SSF46911">
    <property type="entry name" value="Ribosomal protein S18"/>
    <property type="match status" value="1"/>
</dbReference>
<dbReference type="PROSITE" id="PS00057">
    <property type="entry name" value="RIBOSOMAL_S18"/>
    <property type="match status" value="1"/>
</dbReference>
<protein>
    <recommendedName>
        <fullName evidence="1">Small ribosomal subunit protein bS18</fullName>
    </recommendedName>
    <alternativeName>
        <fullName evidence="2">30S ribosomal protein S18</fullName>
    </alternativeName>
</protein>